<gene>
    <name evidence="1" type="primary">rnpA</name>
    <name type="ordered locus">LAF_1842</name>
</gene>
<evidence type="ECO:0000255" key="1">
    <source>
        <dbReference type="HAMAP-Rule" id="MF_00227"/>
    </source>
</evidence>
<keyword id="KW-0255">Endonuclease</keyword>
<keyword id="KW-0378">Hydrolase</keyword>
<keyword id="KW-0540">Nuclease</keyword>
<keyword id="KW-1185">Reference proteome</keyword>
<keyword id="KW-0694">RNA-binding</keyword>
<keyword id="KW-0819">tRNA processing</keyword>
<proteinExistence type="inferred from homology"/>
<comment type="function">
    <text evidence="1">RNaseP catalyzes the removal of the 5'-leader sequence from pre-tRNA to produce the mature 5'-terminus. It can also cleave other RNA substrates such as 4.5S RNA. The protein component plays an auxiliary but essential role in vivo by binding to the 5'-leader sequence and broadening the substrate specificity of the ribozyme.</text>
</comment>
<comment type="catalytic activity">
    <reaction evidence="1">
        <text>Endonucleolytic cleavage of RNA, removing 5'-extranucleotides from tRNA precursor.</text>
        <dbReference type="EC" id="3.1.26.5"/>
    </reaction>
</comment>
<comment type="subunit">
    <text evidence="1">Consists of a catalytic RNA component (M1 or rnpB) and a protein subunit.</text>
</comment>
<comment type="similarity">
    <text evidence="1">Belongs to the RnpA family.</text>
</comment>
<sequence length="114" mass="13355">MKKSYRIKKESDFQRVFETHNSVANHKFVIYQMQKPNQPHFRVGISVGKKVGNAVQRGWVKRRIRQTLLEVKPELKQDVDFLVIARKSAADLSMKEIKKNLVHALTLAHLFEEK</sequence>
<accession>B2GEU6</accession>
<feature type="chain" id="PRO_1000100370" description="Ribonuclease P protein component">
    <location>
        <begin position="1"/>
        <end position="114"/>
    </location>
</feature>
<organism>
    <name type="scientific">Limosilactobacillus fermentum (strain NBRC 3956 / LMG 18251)</name>
    <name type="common">Lactobacillus fermentum</name>
    <dbReference type="NCBI Taxonomy" id="334390"/>
    <lineage>
        <taxon>Bacteria</taxon>
        <taxon>Bacillati</taxon>
        <taxon>Bacillota</taxon>
        <taxon>Bacilli</taxon>
        <taxon>Lactobacillales</taxon>
        <taxon>Lactobacillaceae</taxon>
        <taxon>Limosilactobacillus</taxon>
    </lineage>
</organism>
<protein>
    <recommendedName>
        <fullName evidence="1">Ribonuclease P protein component</fullName>
        <shortName evidence="1">RNase P protein</shortName>
        <shortName evidence="1">RNaseP protein</shortName>
        <ecNumber evidence="1">3.1.26.5</ecNumber>
    </recommendedName>
    <alternativeName>
        <fullName evidence="1">Protein C5</fullName>
    </alternativeName>
</protein>
<reference key="1">
    <citation type="journal article" date="2008" name="DNA Res.">
        <title>Comparative genome analysis of Lactobacillus reuteri and Lactobacillus fermentum reveal a genomic island for reuterin and cobalamin production.</title>
        <authorList>
            <person name="Morita H."/>
            <person name="Toh H."/>
            <person name="Fukuda S."/>
            <person name="Horikawa H."/>
            <person name="Oshima K."/>
            <person name="Suzuki T."/>
            <person name="Murakami M."/>
            <person name="Hisamatsu S."/>
            <person name="Kato Y."/>
            <person name="Takizawa T."/>
            <person name="Fukuoka H."/>
            <person name="Yoshimura T."/>
            <person name="Itoh K."/>
            <person name="O'Sullivan D.J."/>
            <person name="McKay L.L."/>
            <person name="Ohno H."/>
            <person name="Kikuchi J."/>
            <person name="Masaoka T."/>
            <person name="Hattori M."/>
        </authorList>
    </citation>
    <scope>NUCLEOTIDE SEQUENCE [LARGE SCALE GENOMIC DNA]</scope>
    <source>
        <strain>NBRC 3956 / LMG 18251</strain>
    </source>
</reference>
<dbReference type="EC" id="3.1.26.5" evidence="1"/>
<dbReference type="EMBL" id="AP008937">
    <property type="protein sequence ID" value="BAG28178.1"/>
    <property type="molecule type" value="Genomic_DNA"/>
</dbReference>
<dbReference type="RefSeq" id="WP_003682289.1">
    <property type="nucleotide sequence ID" value="NC_010610.1"/>
</dbReference>
<dbReference type="SMR" id="B2GEU6"/>
<dbReference type="GeneID" id="83715708"/>
<dbReference type="KEGG" id="lfe:LAF_1842"/>
<dbReference type="eggNOG" id="COG0594">
    <property type="taxonomic scope" value="Bacteria"/>
</dbReference>
<dbReference type="HOGENOM" id="CLU_117179_9_1_9"/>
<dbReference type="Proteomes" id="UP000001697">
    <property type="component" value="Chromosome"/>
</dbReference>
<dbReference type="GO" id="GO:0030677">
    <property type="term" value="C:ribonuclease P complex"/>
    <property type="evidence" value="ECO:0007669"/>
    <property type="project" value="TreeGrafter"/>
</dbReference>
<dbReference type="GO" id="GO:0042781">
    <property type="term" value="F:3'-tRNA processing endoribonuclease activity"/>
    <property type="evidence" value="ECO:0007669"/>
    <property type="project" value="TreeGrafter"/>
</dbReference>
<dbReference type="GO" id="GO:0004526">
    <property type="term" value="F:ribonuclease P activity"/>
    <property type="evidence" value="ECO:0007669"/>
    <property type="project" value="UniProtKB-UniRule"/>
</dbReference>
<dbReference type="GO" id="GO:0000049">
    <property type="term" value="F:tRNA binding"/>
    <property type="evidence" value="ECO:0007669"/>
    <property type="project" value="UniProtKB-UniRule"/>
</dbReference>
<dbReference type="GO" id="GO:0001682">
    <property type="term" value="P:tRNA 5'-leader removal"/>
    <property type="evidence" value="ECO:0007669"/>
    <property type="project" value="UniProtKB-UniRule"/>
</dbReference>
<dbReference type="FunFam" id="3.30.230.10:FF:000021">
    <property type="entry name" value="Ribonuclease P protein component"/>
    <property type="match status" value="1"/>
</dbReference>
<dbReference type="Gene3D" id="3.30.230.10">
    <property type="match status" value="1"/>
</dbReference>
<dbReference type="HAMAP" id="MF_00227">
    <property type="entry name" value="RNase_P"/>
    <property type="match status" value="1"/>
</dbReference>
<dbReference type="InterPro" id="IPR020568">
    <property type="entry name" value="Ribosomal_Su5_D2-typ_SF"/>
</dbReference>
<dbReference type="InterPro" id="IPR014721">
    <property type="entry name" value="Ribsml_uS5_D2-typ_fold_subgr"/>
</dbReference>
<dbReference type="InterPro" id="IPR000100">
    <property type="entry name" value="RNase_P"/>
</dbReference>
<dbReference type="NCBIfam" id="TIGR00188">
    <property type="entry name" value="rnpA"/>
    <property type="match status" value="1"/>
</dbReference>
<dbReference type="PANTHER" id="PTHR33992">
    <property type="entry name" value="RIBONUCLEASE P PROTEIN COMPONENT"/>
    <property type="match status" value="1"/>
</dbReference>
<dbReference type="PANTHER" id="PTHR33992:SF1">
    <property type="entry name" value="RIBONUCLEASE P PROTEIN COMPONENT"/>
    <property type="match status" value="1"/>
</dbReference>
<dbReference type="Pfam" id="PF00825">
    <property type="entry name" value="Ribonuclease_P"/>
    <property type="match status" value="1"/>
</dbReference>
<dbReference type="SUPFAM" id="SSF54211">
    <property type="entry name" value="Ribosomal protein S5 domain 2-like"/>
    <property type="match status" value="1"/>
</dbReference>
<name>RNPA_LIMF3</name>